<protein>
    <recommendedName>
        <fullName>DNA repair protein RAD50</fullName>
        <shortName>AtRAD50</shortName>
        <ecNumber evidence="3">3.6.-.-</ecNumber>
    </recommendedName>
</protein>
<accession>Q9SL02</accession>
<accession>Q9M6P9</accession>
<evidence type="ECO:0000250" key="1">
    <source>
        <dbReference type="UniProtKB" id="G0SHW7"/>
    </source>
</evidence>
<evidence type="ECO:0000250" key="2">
    <source>
        <dbReference type="UniProtKB" id="P58301"/>
    </source>
</evidence>
<evidence type="ECO:0000250" key="3">
    <source>
        <dbReference type="UniProtKB" id="Q92878"/>
    </source>
</evidence>
<evidence type="ECO:0000255" key="4"/>
<evidence type="ECO:0000255" key="5">
    <source>
        <dbReference type="PROSITE-ProRule" id="PRU00471"/>
    </source>
</evidence>
<evidence type="ECO:0000269" key="6">
    <source>
    </source>
</evidence>
<evidence type="ECO:0000269" key="7">
    <source>
    </source>
</evidence>
<evidence type="ECO:0000269" key="8">
    <source>
    </source>
</evidence>
<evidence type="ECO:0000269" key="9">
    <source>
    </source>
</evidence>
<evidence type="ECO:0000305" key="10"/>
<evidence type="ECO:0000305" key="11">
    <source>
    </source>
</evidence>
<evidence type="ECO:0000305" key="12">
    <source>
    </source>
</evidence>
<dbReference type="EC" id="3.6.-.-" evidence="3"/>
<dbReference type="EMBL" id="AF168748">
    <property type="protein sequence ID" value="AAF36810.1"/>
    <property type="molecule type" value="mRNA"/>
</dbReference>
<dbReference type="EMBL" id="AC006223">
    <property type="protein sequence ID" value="AAD15407.2"/>
    <property type="molecule type" value="Genomic_DNA"/>
</dbReference>
<dbReference type="EMBL" id="CP002685">
    <property type="protein sequence ID" value="AEC08614.1"/>
    <property type="molecule type" value="Genomic_DNA"/>
</dbReference>
<dbReference type="EMBL" id="AY139771">
    <property type="protein sequence ID" value="AAM98090.1"/>
    <property type="molecule type" value="mRNA"/>
</dbReference>
<dbReference type="EMBL" id="BT005823">
    <property type="protein sequence ID" value="AAO64758.1"/>
    <property type="molecule type" value="mRNA"/>
</dbReference>
<dbReference type="PIR" id="D84727">
    <property type="entry name" value="D84727"/>
</dbReference>
<dbReference type="RefSeq" id="NP_565733.1">
    <property type="nucleotide sequence ID" value="NM_128757.4"/>
</dbReference>
<dbReference type="SMR" id="Q9SL02"/>
<dbReference type="BioGRID" id="3103">
    <property type="interactions" value="12"/>
</dbReference>
<dbReference type="FunCoup" id="Q9SL02">
    <property type="interactions" value="3755"/>
</dbReference>
<dbReference type="STRING" id="3702.Q9SL02"/>
<dbReference type="iPTMnet" id="Q9SL02"/>
<dbReference type="PaxDb" id="3702-AT2G31970.1"/>
<dbReference type="ProteomicsDB" id="236426"/>
<dbReference type="EnsemblPlants" id="AT2G31970.1">
    <property type="protein sequence ID" value="AT2G31970.1"/>
    <property type="gene ID" value="AT2G31970"/>
</dbReference>
<dbReference type="GeneID" id="817756"/>
<dbReference type="Gramene" id="AT2G31970.1">
    <property type="protein sequence ID" value="AT2G31970.1"/>
    <property type="gene ID" value="AT2G31970"/>
</dbReference>
<dbReference type="KEGG" id="ath:AT2G31970"/>
<dbReference type="Araport" id="AT2G31970"/>
<dbReference type="TAIR" id="AT2G31970">
    <property type="gene designation" value="RAD50"/>
</dbReference>
<dbReference type="eggNOG" id="KOG0962">
    <property type="taxonomic scope" value="Eukaryota"/>
</dbReference>
<dbReference type="HOGENOM" id="CLU_006184_0_0_1"/>
<dbReference type="InParanoid" id="Q9SL02"/>
<dbReference type="OMA" id="FSDYYYR"/>
<dbReference type="OrthoDB" id="18797at2759"/>
<dbReference type="PhylomeDB" id="Q9SL02"/>
<dbReference type="PRO" id="PR:Q9SL02"/>
<dbReference type="Proteomes" id="UP000006548">
    <property type="component" value="Chromosome 2"/>
</dbReference>
<dbReference type="ExpressionAtlas" id="Q9SL02">
    <property type="expression patterns" value="baseline and differential"/>
</dbReference>
<dbReference type="GO" id="GO:0005694">
    <property type="term" value="C:chromosome"/>
    <property type="evidence" value="ECO:0007669"/>
    <property type="project" value="UniProtKB-SubCell"/>
</dbReference>
<dbReference type="GO" id="GO:0005737">
    <property type="term" value="C:cytoplasm"/>
    <property type="evidence" value="ECO:0000314"/>
    <property type="project" value="TAIR"/>
</dbReference>
<dbReference type="GO" id="GO:0030870">
    <property type="term" value="C:Mre11 complex"/>
    <property type="evidence" value="ECO:0000304"/>
    <property type="project" value="TAIR"/>
</dbReference>
<dbReference type="GO" id="GO:0005634">
    <property type="term" value="C:nucleus"/>
    <property type="evidence" value="ECO:0000314"/>
    <property type="project" value="TAIR"/>
</dbReference>
<dbReference type="GO" id="GO:0005524">
    <property type="term" value="F:ATP binding"/>
    <property type="evidence" value="ECO:0007669"/>
    <property type="project" value="UniProtKB-KW"/>
</dbReference>
<dbReference type="GO" id="GO:0016887">
    <property type="term" value="F:ATP hydrolysis activity"/>
    <property type="evidence" value="ECO:0007669"/>
    <property type="project" value="InterPro"/>
</dbReference>
<dbReference type="GO" id="GO:0046872">
    <property type="term" value="F:metal ion binding"/>
    <property type="evidence" value="ECO:0007669"/>
    <property type="project" value="UniProtKB-KW"/>
</dbReference>
<dbReference type="GO" id="GO:0006302">
    <property type="term" value="P:double-strand break repair"/>
    <property type="evidence" value="ECO:0000315"/>
    <property type="project" value="TAIR"/>
</dbReference>
<dbReference type="GO" id="GO:0051321">
    <property type="term" value="P:meiotic cell cycle"/>
    <property type="evidence" value="ECO:0007669"/>
    <property type="project" value="UniProtKB-KW"/>
</dbReference>
<dbReference type="GO" id="GO:0006312">
    <property type="term" value="P:mitotic recombination"/>
    <property type="evidence" value="ECO:0000315"/>
    <property type="project" value="TAIR"/>
</dbReference>
<dbReference type="GO" id="GO:0016233">
    <property type="term" value="P:telomere capping"/>
    <property type="evidence" value="ECO:0000315"/>
    <property type="project" value="TAIR"/>
</dbReference>
<dbReference type="GO" id="GO:0000723">
    <property type="term" value="P:telomere maintenance"/>
    <property type="evidence" value="ECO:0000315"/>
    <property type="project" value="TAIR"/>
</dbReference>
<dbReference type="FunFam" id="3.40.50.300:FF:001649">
    <property type="entry name" value="DNA repair protein RAD50"/>
    <property type="match status" value="1"/>
</dbReference>
<dbReference type="FunFam" id="3.40.50.300:FF:004004">
    <property type="entry name" value="DNA repair protein RAD50"/>
    <property type="match status" value="1"/>
</dbReference>
<dbReference type="Gene3D" id="3.40.50.300">
    <property type="entry name" value="P-loop containing nucleotide triphosphate hydrolases"/>
    <property type="match status" value="2"/>
</dbReference>
<dbReference type="InterPro" id="IPR027417">
    <property type="entry name" value="P-loop_NTPase"/>
</dbReference>
<dbReference type="InterPro" id="IPR038729">
    <property type="entry name" value="Rad50/SbcC_AAA"/>
</dbReference>
<dbReference type="InterPro" id="IPR004584">
    <property type="entry name" value="Rad50_eukaryotes"/>
</dbReference>
<dbReference type="InterPro" id="IPR013134">
    <property type="entry name" value="Zn_hook_RAD50"/>
</dbReference>
<dbReference type="NCBIfam" id="TIGR00606">
    <property type="entry name" value="rad50"/>
    <property type="match status" value="1"/>
</dbReference>
<dbReference type="PANTHER" id="PTHR18867:SF12">
    <property type="entry name" value="DNA REPAIR PROTEIN RAD50"/>
    <property type="match status" value="1"/>
</dbReference>
<dbReference type="PANTHER" id="PTHR18867">
    <property type="entry name" value="RAD50"/>
    <property type="match status" value="1"/>
</dbReference>
<dbReference type="Pfam" id="PF13476">
    <property type="entry name" value="AAA_23"/>
    <property type="match status" value="1"/>
</dbReference>
<dbReference type="Pfam" id="PF04423">
    <property type="entry name" value="Rad50_zn_hook"/>
    <property type="match status" value="1"/>
</dbReference>
<dbReference type="SUPFAM" id="SSF52540">
    <property type="entry name" value="P-loop containing nucleoside triphosphate hydrolases"/>
    <property type="match status" value="2"/>
</dbReference>
<dbReference type="PROSITE" id="PS51131">
    <property type="entry name" value="ZN_HOOK"/>
    <property type="match status" value="1"/>
</dbReference>
<keyword id="KW-0067">ATP-binding</keyword>
<keyword id="KW-0131">Cell cycle</keyword>
<keyword id="KW-0158">Chromosome</keyword>
<keyword id="KW-0175">Coiled coil</keyword>
<keyword id="KW-0227">DNA damage</keyword>
<keyword id="KW-0234">DNA repair</keyword>
<keyword id="KW-0378">Hydrolase</keyword>
<keyword id="KW-0460">Magnesium</keyword>
<keyword id="KW-0469">Meiosis</keyword>
<keyword id="KW-0479">Metal-binding</keyword>
<keyword id="KW-0547">Nucleotide-binding</keyword>
<keyword id="KW-0539">Nucleus</keyword>
<keyword id="KW-1185">Reference proteome</keyword>
<keyword id="KW-0862">Zinc</keyword>
<reference key="1">
    <citation type="journal article" date="2001" name="Plant J.">
        <title>Disruption of the Arabidopsis RAD50 gene leads to plant sterility and MMS sensitivity.</title>
        <authorList>
            <person name="Gallego M.E."/>
            <person name="Jeanneau M."/>
            <person name="Granier F."/>
            <person name="Bouchez D."/>
            <person name="Bechtold N."/>
            <person name="White C.I."/>
        </authorList>
    </citation>
    <scope>NUCLEOTIDE SEQUENCE [MRNA]</scope>
    <scope>FUNCTION</scope>
    <scope>TISSUE SPECIFICITY</scope>
    <source>
        <strain>cv. Columbia</strain>
    </source>
</reference>
<reference key="2">
    <citation type="journal article" date="1999" name="Nature">
        <title>Sequence and analysis of chromosome 2 of the plant Arabidopsis thaliana.</title>
        <authorList>
            <person name="Lin X."/>
            <person name="Kaul S."/>
            <person name="Rounsley S.D."/>
            <person name="Shea T.P."/>
            <person name="Benito M.-I."/>
            <person name="Town C.D."/>
            <person name="Fujii C.Y."/>
            <person name="Mason T.M."/>
            <person name="Bowman C.L."/>
            <person name="Barnstead M.E."/>
            <person name="Feldblyum T.V."/>
            <person name="Buell C.R."/>
            <person name="Ketchum K.A."/>
            <person name="Lee J.J."/>
            <person name="Ronning C.M."/>
            <person name="Koo H.L."/>
            <person name="Moffat K.S."/>
            <person name="Cronin L.A."/>
            <person name="Shen M."/>
            <person name="Pai G."/>
            <person name="Van Aken S."/>
            <person name="Umayam L."/>
            <person name="Tallon L.J."/>
            <person name="Gill J.E."/>
            <person name="Adams M.D."/>
            <person name="Carrera A.J."/>
            <person name="Creasy T.H."/>
            <person name="Goodman H.M."/>
            <person name="Somerville C.R."/>
            <person name="Copenhaver G.P."/>
            <person name="Preuss D."/>
            <person name="Nierman W.C."/>
            <person name="White O."/>
            <person name="Eisen J.A."/>
            <person name="Salzberg S.L."/>
            <person name="Fraser C.M."/>
            <person name="Venter J.C."/>
        </authorList>
    </citation>
    <scope>NUCLEOTIDE SEQUENCE [LARGE SCALE GENOMIC DNA]</scope>
    <source>
        <strain>cv. Columbia</strain>
    </source>
</reference>
<reference key="3">
    <citation type="journal article" date="2017" name="Plant J.">
        <title>Araport11: a complete reannotation of the Arabidopsis thaliana reference genome.</title>
        <authorList>
            <person name="Cheng C.Y."/>
            <person name="Krishnakumar V."/>
            <person name="Chan A.P."/>
            <person name="Thibaud-Nissen F."/>
            <person name="Schobel S."/>
            <person name="Town C.D."/>
        </authorList>
    </citation>
    <scope>GENOME REANNOTATION</scope>
    <source>
        <strain>cv. Columbia</strain>
    </source>
</reference>
<reference key="4">
    <citation type="journal article" date="2003" name="Science">
        <title>Empirical analysis of transcriptional activity in the Arabidopsis genome.</title>
        <authorList>
            <person name="Yamada K."/>
            <person name="Lim J."/>
            <person name="Dale J.M."/>
            <person name="Chen H."/>
            <person name="Shinn P."/>
            <person name="Palm C.J."/>
            <person name="Southwick A.M."/>
            <person name="Wu H.C."/>
            <person name="Kim C.J."/>
            <person name="Nguyen M."/>
            <person name="Pham P.K."/>
            <person name="Cheuk R.F."/>
            <person name="Karlin-Newmann G."/>
            <person name="Liu S.X."/>
            <person name="Lam B."/>
            <person name="Sakano H."/>
            <person name="Wu T."/>
            <person name="Yu G."/>
            <person name="Miranda M."/>
            <person name="Quach H.L."/>
            <person name="Tripp M."/>
            <person name="Chang C.H."/>
            <person name="Lee J.M."/>
            <person name="Toriumi M.J."/>
            <person name="Chan M.M."/>
            <person name="Tang C.C."/>
            <person name="Onodera C.S."/>
            <person name="Deng J.M."/>
            <person name="Akiyama K."/>
            <person name="Ansari Y."/>
            <person name="Arakawa T."/>
            <person name="Banh J."/>
            <person name="Banno F."/>
            <person name="Bowser L."/>
            <person name="Brooks S.Y."/>
            <person name="Carninci P."/>
            <person name="Chao Q."/>
            <person name="Choy N."/>
            <person name="Enju A."/>
            <person name="Goldsmith A.D."/>
            <person name="Gurjal M."/>
            <person name="Hansen N.F."/>
            <person name="Hayashizaki Y."/>
            <person name="Johnson-Hopson C."/>
            <person name="Hsuan V.W."/>
            <person name="Iida K."/>
            <person name="Karnes M."/>
            <person name="Khan S."/>
            <person name="Koesema E."/>
            <person name="Ishida J."/>
            <person name="Jiang P.X."/>
            <person name="Jones T."/>
            <person name="Kawai J."/>
            <person name="Kamiya A."/>
            <person name="Meyers C."/>
            <person name="Nakajima M."/>
            <person name="Narusaka M."/>
            <person name="Seki M."/>
            <person name="Sakurai T."/>
            <person name="Satou M."/>
            <person name="Tamse R."/>
            <person name="Vaysberg M."/>
            <person name="Wallender E.K."/>
            <person name="Wong C."/>
            <person name="Yamamura Y."/>
            <person name="Yuan S."/>
            <person name="Shinozaki K."/>
            <person name="Davis R.W."/>
            <person name="Theologis A."/>
            <person name="Ecker J.R."/>
        </authorList>
    </citation>
    <scope>NUCLEOTIDE SEQUENCE [LARGE SCALE MRNA]</scope>
    <source>
        <strain>cv. Columbia</strain>
    </source>
</reference>
<reference key="5">
    <citation type="journal article" date="2001" name="EMBO Rep.">
        <title>Homologous recombination in planta is stimulated in the absence of Rad50.</title>
        <authorList>
            <person name="Gherbi H."/>
            <person name="Gallego M.E."/>
            <person name="Jalut N."/>
            <person name="Lucht J.M."/>
            <person name="Hohn B."/>
            <person name="White C.I."/>
        </authorList>
    </citation>
    <scope>FUNCTION</scope>
</reference>
<reference key="6">
    <citation type="journal article" date="2001" name="Proc. Natl. Acad. Sci. U.S.A.">
        <title>RAD50 function is essential for telomere maintenance in Arabidopsis.</title>
        <authorList>
            <person name="Gallego M.E."/>
            <person name="White C.I."/>
        </authorList>
    </citation>
    <scope>FUNCTION</scope>
</reference>
<reference key="7">
    <citation type="journal article" date="2002" name="FEBS Lett.">
        <title>The plant Rad50-Mre11 protein complex.</title>
        <authorList>
            <person name="Daoudal-Cotterell S."/>
            <person name="Gallego M.E."/>
            <person name="White C.I."/>
        </authorList>
    </citation>
    <scope>INTERACTION WITH MRE11</scope>
</reference>
<reference key="8">
    <citation type="journal article" date="2004" name="Chromosoma">
        <title>Meiotic defects in the Arabidopsis rad50 mutant point to conservation of the MRX complex function in early stages of meiotic recombination.</title>
        <authorList>
            <person name="Bleuyard J.-Y."/>
            <person name="Gallego M.E."/>
            <person name="White C.I."/>
        </authorList>
    </citation>
    <scope>FUNCTION</scope>
</reference>
<reference key="9">
    <citation type="journal article" date="2006" name="DNA Repair">
        <title>Recent advances in understanding of the DNA double-strand break repair machinery of plants.</title>
        <authorList>
            <person name="Bleuyard J.Y."/>
            <person name="Gallego M.E."/>
            <person name="White C.I."/>
        </authorList>
    </citation>
    <scope>REVIEW ON DNA REPAIR</scope>
</reference>
<reference key="10">
    <citation type="journal article" date="2007" name="Plant J.">
        <title>NBS1 is involved in DNA repair and plays a synergistic role with ATM in mediating meiotic homologous recombination in plants.</title>
        <authorList>
            <person name="Waterworth W.M."/>
            <person name="Altun C."/>
            <person name="Armstrong S.J."/>
            <person name="Roberts N."/>
            <person name="Dean P.J."/>
            <person name="Young K."/>
            <person name="Weil C.F."/>
            <person name="Bray C.M."/>
            <person name="West C.E."/>
        </authorList>
    </citation>
    <scope>INTERACTION WITH MRE11</scope>
    <source>
        <strain>cv. Columbia</strain>
    </source>
</reference>
<name>RAD50_ARATH</name>
<sequence>MSTVDKMLIKGIRSFDPENKNVVTFFRPLTLIVGANGAGKTTIIECLKVSCTGELPPNARSGHSFIHDPKVAGETETKAQIKLRFKTAAGKDVVCIRSFQLTQKASKMEYKAIESVLQTINPHTGEKVCLSYRCADMDREIPALMGVSKAILENVIFVHQDESNWPLQDPSTLKKKFDDIFSATRYTKALEVIKKLHKDQAQEIKTFKLKLENLQTLKDAAYKLRESIAQDQERTESSKVQMLELETSVQKVDAEVHNKEMMLKDLRKLQDQVSIKTAERSTLFKEQQRQYAALPEENEDTIEELKEWKSKFEERLALLGTKIRKMEREMVDTETTISSLHNAKTNYMLEISKLQTEAEAHMLLKNERDSTIQNIFFHYNLGNVPSTPFSTEVVLNLTNRIKSRLGELEMDLLDKKKSNETALSTAWDCYMDANDRWKSIEAQKRAKDEIKMGISKRIEEKEIERDSFEFEISTVDVKQTDEREKQVQVELERKTKQNSERGFESKIEQKQHEIYSLEHKIKTLNRERDVMAGDAEDRVKLSLKKTEQENLKKKHKKIIDECKDRIRGVLKGRLPPEKDMKREIVQALRSIEREYDDLSLKSREAEKEVNMLQMKIQEVNNSLFKHNKDTESRKRYIESKLQALKQESVTIDAYPKLLESAKDKRDDRKREYNMANGMRQMFEPFEKRARQEHSCPCCERSFTADEEASFIKKQRVKASSTGEHLKALAVESSNADSVFQQLDKLRAVFEEYSKLTTEIIPLAEKTLQEHTEELGQKSEALDDVLGISAQIKADKDSIEALVQPLENADRIFQEIVSYQKQIEDLEYKLDFRGLGVKTMEEIQSELSSLQSSKDKLHGELEKLRDDQIYMERDISCLQARWHAVREEKAKAANLLRDVTKAEEDLERLAEEKSQLDLDVKYLTEALGPLSKEKEQLLSDYNDMKIRRNQEYEELAEKKRNYQQEVEALLKASYKINEYHDLKKGERLDDIQEKQRLSDSQLQSCEARKNELAGELNRNKDLMRNQDQLRRNIEDNLNYRTTKAKVEELTREIESLEEQILNIGGIAAVEAEIVKILRERERLLSELNRCRGTVSVYESSISKNRVELKQAQYKDIDKRHFDQLIQLKTTEMANKDLDRYYNALDKALMRFHTMKMEEINKIIRELWQQTYRGQDMDYIRIHSDSEGAGTRSYSYKVLMQTGDTELEMRGRCSAGQKVLASLIIRLALAETFCLNCGILALDEPTTNLDGPNSESLAGALLRIMEDRKGQENFQLIVITHDERFAQMIGQRQHAEKYYRVAKDDMQHSIIEAQEIFD</sequence>
<comment type="function">
    <text evidence="1 3 6 7 8 9">Component of the MRN complex, which plays a central role in double-strand break (DSB) repair, DNA recombination, maintenance of telomere integrity and meiosis (PubMed:11169180, PubMed:11172016, PubMed:11306548, PubMed:15309561). The MRN complex is involved in the repair of DNA double-strand breaks (DSBs) via homologous recombination (HR), an error-free mechanism which primarily occurs during S and G2 phases (By similarity). The complex (1) mediates the end resection of damaged DNA, which generates proper single-stranded DNA, a key initial steps in HR, and is (2) required for the recruitment of other repair factors and efficient activation of ATM and ATR upon DNA damage (By similarity). The MRN complex possesses single-strand endonuclease activity and double-strand-specific 3'-5' exonuclease activity, which are provided by MRE11, to initiate end resection, which is required for single-strand invasion and recombination (By similarity). Within the complex, RAD50 is both required to bind DNA ends and hold them in close proximity and regulate the activity of MRE11 (By similarity). RAD50 provides an ATP-dependent control of MRE11 by positioning DNA ends into the MRE11 active site: ATP-binding induces a large structural change from an open form with accessible MRE11 nuclease sites into a closed form (By similarity). Required during meiosis for both male and female gametophytic development, for pairing and synapsis of homologous chromosomes during the early stages of meiotic recombination, especially during the pachytene stage of the first division (PubMed:11169180, PubMed:15309561).</text>
</comment>
<comment type="catalytic activity">
    <reaction evidence="1">
        <text>ATP + H2O = ADP + phosphate + H(+)</text>
        <dbReference type="Rhea" id="RHEA:13065"/>
        <dbReference type="ChEBI" id="CHEBI:15377"/>
        <dbReference type="ChEBI" id="CHEBI:15378"/>
        <dbReference type="ChEBI" id="CHEBI:30616"/>
        <dbReference type="ChEBI" id="CHEBI:43474"/>
        <dbReference type="ChEBI" id="CHEBI:456216"/>
    </reaction>
</comment>
<comment type="cofactor">
    <cofactor evidence="1">
        <name>Zn(2+)</name>
        <dbReference type="ChEBI" id="CHEBI:29105"/>
    </cofactor>
    <text evidence="1">Binds 1 zinc ion per homodimer.</text>
</comment>
<comment type="subunit">
    <text evidence="11 12">Component of the MRN complex composed of two heterodimers RAD50 and MRE11 associated with a single NBS1.</text>
</comment>
<comment type="subcellular location">
    <subcellularLocation>
        <location evidence="3">Nucleus</location>
    </subcellularLocation>
    <subcellularLocation>
        <location evidence="3">Chromosome</location>
    </subcellularLocation>
    <text evidence="3">Localizes to DNA double-strand breaks (DSBs).</text>
</comment>
<comment type="tissue specificity">
    <text evidence="6">Widely expressed, predominantly in meristematic and reproductive tissues.</text>
</comment>
<comment type="domain">
    <text evidence="2">The zinc-hook, which separates the large intramolecular coiled coil regions, contains 2 Cys residues that coordinate one molecule of zinc with the help of the 2 Cys residues of the zinc-hook of another RAD50 molecule, thereby forming a V-shaped homodimer. The two heads of the homodimer, which constitute the ATP-binding domain, interact with the MRE11 homodimer.</text>
</comment>
<comment type="similarity">
    <text evidence="10">Belongs to the SMC family. RAD50 subfamily.</text>
</comment>
<organism>
    <name type="scientific">Arabidopsis thaliana</name>
    <name type="common">Mouse-ear cress</name>
    <dbReference type="NCBI Taxonomy" id="3702"/>
    <lineage>
        <taxon>Eukaryota</taxon>
        <taxon>Viridiplantae</taxon>
        <taxon>Streptophyta</taxon>
        <taxon>Embryophyta</taxon>
        <taxon>Tracheophyta</taxon>
        <taxon>Spermatophyta</taxon>
        <taxon>Magnoliopsida</taxon>
        <taxon>eudicotyledons</taxon>
        <taxon>Gunneridae</taxon>
        <taxon>Pentapetalae</taxon>
        <taxon>rosids</taxon>
        <taxon>malvids</taxon>
        <taxon>Brassicales</taxon>
        <taxon>Brassicaceae</taxon>
        <taxon>Camelineae</taxon>
        <taxon>Arabidopsis</taxon>
    </lineage>
</organism>
<feature type="chain" id="PRO_0000138646" description="DNA repair protein RAD50">
    <location>
        <begin position="1"/>
        <end position="1316"/>
    </location>
</feature>
<feature type="domain" description="Zinc-hook" evidence="5">
    <location>
        <begin position="648"/>
        <end position="747"/>
    </location>
</feature>
<feature type="coiled-coil region" evidence="4">
    <location>
        <begin position="194"/>
        <end position="343"/>
    </location>
</feature>
<feature type="coiled-coil region" evidence="4">
    <location>
        <begin position="648"/>
        <end position="686"/>
    </location>
</feature>
<feature type="coiled-coil region" evidence="4">
    <location>
        <begin position="719"/>
        <end position="747"/>
    </location>
</feature>
<feature type="coiled-coil region" evidence="4">
    <location>
        <begin position="762"/>
        <end position="972"/>
    </location>
</feature>
<feature type="coiled-coil region" evidence="4">
    <location>
        <begin position="999"/>
        <end position="1090"/>
    </location>
</feature>
<feature type="binding site" evidence="1">
    <location>
        <position position="13"/>
    </location>
    <ligand>
        <name>ATP</name>
        <dbReference type="ChEBI" id="CHEBI:30616"/>
    </ligand>
</feature>
<feature type="binding site" evidence="1">
    <location>
        <position position="36"/>
    </location>
    <ligand>
        <name>ATP</name>
        <dbReference type="ChEBI" id="CHEBI:30616"/>
    </ligand>
</feature>
<feature type="binding site" evidence="1">
    <location>
        <position position="37"/>
    </location>
    <ligand>
        <name>ATP</name>
        <dbReference type="ChEBI" id="CHEBI:30616"/>
    </ligand>
</feature>
<feature type="binding site" evidence="1">
    <location>
        <position position="39"/>
    </location>
    <ligand>
        <name>ATP</name>
        <dbReference type="ChEBI" id="CHEBI:30616"/>
    </ligand>
</feature>
<feature type="binding site" evidence="1">
    <location>
        <position position="40"/>
    </location>
    <ligand>
        <name>ATP</name>
        <dbReference type="ChEBI" id="CHEBI:30616"/>
    </ligand>
</feature>
<feature type="binding site" evidence="1">
    <location>
        <position position="41"/>
    </location>
    <ligand>
        <name>ATP</name>
        <dbReference type="ChEBI" id="CHEBI:30616"/>
    </ligand>
</feature>
<feature type="binding site" evidence="1">
    <location>
        <position position="41"/>
    </location>
    <ligand>
        <name>Mg(2+)</name>
        <dbReference type="ChEBI" id="CHEBI:18420"/>
    </ligand>
</feature>
<feature type="binding site" evidence="1">
    <location>
        <position position="42"/>
    </location>
    <ligand>
        <name>ATP</name>
        <dbReference type="ChEBI" id="CHEBI:30616"/>
    </ligand>
</feature>
<feature type="binding site" evidence="1">
    <location>
        <position position="66"/>
    </location>
    <ligand>
        <name>ATP</name>
        <dbReference type="ChEBI" id="CHEBI:30616"/>
    </ligand>
</feature>
<feature type="binding site" evidence="1">
    <location>
        <position position="68"/>
    </location>
    <ligand>
        <name>ATP</name>
        <dbReference type="ChEBI" id="CHEBI:30616"/>
    </ligand>
</feature>
<feature type="binding site" evidence="1">
    <location>
        <position position="160"/>
    </location>
    <ligand>
        <name>ATP</name>
        <dbReference type="ChEBI" id="CHEBI:30616"/>
    </ligand>
</feature>
<feature type="binding site" evidence="1">
    <location>
        <position position="160"/>
    </location>
    <ligand>
        <name>Mg(2+)</name>
        <dbReference type="ChEBI" id="CHEBI:18420"/>
    </ligand>
</feature>
<feature type="binding site" evidence="5">
    <location>
        <position position="695"/>
    </location>
    <ligand>
        <name>Zn(2+)</name>
        <dbReference type="ChEBI" id="CHEBI:29105"/>
    </ligand>
</feature>
<feature type="binding site" evidence="5">
    <location>
        <position position="698"/>
    </location>
    <ligand>
        <name>Zn(2+)</name>
        <dbReference type="ChEBI" id="CHEBI:29105"/>
    </ligand>
</feature>
<proteinExistence type="evidence at protein level"/>
<gene>
    <name type="primary">RAD50</name>
    <name type="ordered locus">At2g31970</name>
    <name type="ORF">F22D22.28</name>
</gene>